<feature type="chain" id="PRO_0000149358" description="Adenine phosphoribosyltransferase">
    <location>
        <begin position="1"/>
        <end position="191"/>
    </location>
</feature>
<comment type="function">
    <text evidence="1">Catalyzes a salvage reaction resulting in the formation of AMP, that is energically less costly than de novo synthesis.</text>
</comment>
<comment type="catalytic activity">
    <reaction evidence="1">
        <text>AMP + diphosphate = 5-phospho-alpha-D-ribose 1-diphosphate + adenine</text>
        <dbReference type="Rhea" id="RHEA:16609"/>
        <dbReference type="ChEBI" id="CHEBI:16708"/>
        <dbReference type="ChEBI" id="CHEBI:33019"/>
        <dbReference type="ChEBI" id="CHEBI:58017"/>
        <dbReference type="ChEBI" id="CHEBI:456215"/>
        <dbReference type="EC" id="2.4.2.7"/>
    </reaction>
</comment>
<comment type="pathway">
    <text evidence="1">Purine metabolism; AMP biosynthesis via salvage pathway; AMP from adenine: step 1/1.</text>
</comment>
<comment type="subunit">
    <text evidence="1">Homodimer.</text>
</comment>
<comment type="subcellular location">
    <subcellularLocation>
        <location evidence="1">Cytoplasm</location>
    </subcellularLocation>
</comment>
<comment type="similarity">
    <text evidence="1">Belongs to the purine/pyrimidine phosphoribosyltransferase family.</text>
</comment>
<sequence length="191" mass="21136">MLLFPGTFTMQTDYAELVRRTIRSVPDWPTPGVTFRDITPVLQDPRTFRVLIDLFVYRYMRQRLDLVAGVDARGFIVGAVLAHELNLGFVPVRKKGKLPYRTVAEEYSLEYGNAAVEMHTDSVRTGQRVLLVDDLIATGGTMLAAIKLLQRLGANVVEAAAIIDLPYLGGSAQITATGTPLYTVCQYQEGD</sequence>
<dbReference type="EC" id="2.4.2.7" evidence="1"/>
<dbReference type="EMBL" id="BX640450">
    <property type="protein sequence ID" value="CAE34856.1"/>
    <property type="molecule type" value="Genomic_DNA"/>
</dbReference>
<dbReference type="SMR" id="Q7WEY7"/>
<dbReference type="KEGG" id="bbr:BB4493"/>
<dbReference type="eggNOG" id="COG0503">
    <property type="taxonomic scope" value="Bacteria"/>
</dbReference>
<dbReference type="HOGENOM" id="CLU_063339_3_0_4"/>
<dbReference type="UniPathway" id="UPA00588">
    <property type="reaction ID" value="UER00646"/>
</dbReference>
<dbReference type="Proteomes" id="UP000001027">
    <property type="component" value="Chromosome"/>
</dbReference>
<dbReference type="GO" id="GO:0005737">
    <property type="term" value="C:cytoplasm"/>
    <property type="evidence" value="ECO:0007669"/>
    <property type="project" value="UniProtKB-SubCell"/>
</dbReference>
<dbReference type="GO" id="GO:0002055">
    <property type="term" value="F:adenine binding"/>
    <property type="evidence" value="ECO:0007669"/>
    <property type="project" value="TreeGrafter"/>
</dbReference>
<dbReference type="GO" id="GO:0003999">
    <property type="term" value="F:adenine phosphoribosyltransferase activity"/>
    <property type="evidence" value="ECO:0007669"/>
    <property type="project" value="UniProtKB-UniRule"/>
</dbReference>
<dbReference type="GO" id="GO:0016208">
    <property type="term" value="F:AMP binding"/>
    <property type="evidence" value="ECO:0007669"/>
    <property type="project" value="TreeGrafter"/>
</dbReference>
<dbReference type="GO" id="GO:0006168">
    <property type="term" value="P:adenine salvage"/>
    <property type="evidence" value="ECO:0007669"/>
    <property type="project" value="InterPro"/>
</dbReference>
<dbReference type="GO" id="GO:0044209">
    <property type="term" value="P:AMP salvage"/>
    <property type="evidence" value="ECO:0007669"/>
    <property type="project" value="UniProtKB-UniRule"/>
</dbReference>
<dbReference type="GO" id="GO:0006166">
    <property type="term" value="P:purine ribonucleoside salvage"/>
    <property type="evidence" value="ECO:0007669"/>
    <property type="project" value="UniProtKB-KW"/>
</dbReference>
<dbReference type="CDD" id="cd06223">
    <property type="entry name" value="PRTases_typeI"/>
    <property type="match status" value="1"/>
</dbReference>
<dbReference type="FunFam" id="3.40.50.2020:FF:000021">
    <property type="entry name" value="Adenine phosphoribosyltransferase"/>
    <property type="match status" value="1"/>
</dbReference>
<dbReference type="Gene3D" id="3.40.50.2020">
    <property type="match status" value="1"/>
</dbReference>
<dbReference type="HAMAP" id="MF_00004">
    <property type="entry name" value="Aden_phosphoribosyltr"/>
    <property type="match status" value="1"/>
</dbReference>
<dbReference type="InterPro" id="IPR005764">
    <property type="entry name" value="Ade_phspho_trans"/>
</dbReference>
<dbReference type="InterPro" id="IPR000836">
    <property type="entry name" value="PRibTrfase_dom"/>
</dbReference>
<dbReference type="InterPro" id="IPR029057">
    <property type="entry name" value="PRTase-like"/>
</dbReference>
<dbReference type="InterPro" id="IPR050054">
    <property type="entry name" value="UPRTase/APRTase"/>
</dbReference>
<dbReference type="NCBIfam" id="TIGR01090">
    <property type="entry name" value="apt"/>
    <property type="match status" value="1"/>
</dbReference>
<dbReference type="NCBIfam" id="NF002634">
    <property type="entry name" value="PRK02304.1-3"/>
    <property type="match status" value="1"/>
</dbReference>
<dbReference type="NCBIfam" id="NF002636">
    <property type="entry name" value="PRK02304.1-5"/>
    <property type="match status" value="1"/>
</dbReference>
<dbReference type="PANTHER" id="PTHR32315">
    <property type="entry name" value="ADENINE PHOSPHORIBOSYLTRANSFERASE"/>
    <property type="match status" value="1"/>
</dbReference>
<dbReference type="PANTHER" id="PTHR32315:SF3">
    <property type="entry name" value="ADENINE PHOSPHORIBOSYLTRANSFERASE"/>
    <property type="match status" value="1"/>
</dbReference>
<dbReference type="Pfam" id="PF00156">
    <property type="entry name" value="Pribosyltran"/>
    <property type="match status" value="1"/>
</dbReference>
<dbReference type="SUPFAM" id="SSF53271">
    <property type="entry name" value="PRTase-like"/>
    <property type="match status" value="1"/>
</dbReference>
<dbReference type="PROSITE" id="PS00103">
    <property type="entry name" value="PUR_PYR_PR_TRANSFER"/>
    <property type="match status" value="1"/>
</dbReference>
<evidence type="ECO:0000255" key="1">
    <source>
        <dbReference type="HAMAP-Rule" id="MF_00004"/>
    </source>
</evidence>
<organism>
    <name type="scientific">Bordetella bronchiseptica (strain ATCC BAA-588 / NCTC 13252 / RB50)</name>
    <name type="common">Alcaligenes bronchisepticus</name>
    <dbReference type="NCBI Taxonomy" id="257310"/>
    <lineage>
        <taxon>Bacteria</taxon>
        <taxon>Pseudomonadati</taxon>
        <taxon>Pseudomonadota</taxon>
        <taxon>Betaproteobacteria</taxon>
        <taxon>Burkholderiales</taxon>
        <taxon>Alcaligenaceae</taxon>
        <taxon>Bordetella</taxon>
    </lineage>
</organism>
<reference key="1">
    <citation type="journal article" date="2003" name="Nat. Genet.">
        <title>Comparative analysis of the genome sequences of Bordetella pertussis, Bordetella parapertussis and Bordetella bronchiseptica.</title>
        <authorList>
            <person name="Parkhill J."/>
            <person name="Sebaihia M."/>
            <person name="Preston A."/>
            <person name="Murphy L.D."/>
            <person name="Thomson N.R."/>
            <person name="Harris D.E."/>
            <person name="Holden M.T.G."/>
            <person name="Churcher C.M."/>
            <person name="Bentley S.D."/>
            <person name="Mungall K.L."/>
            <person name="Cerdeno-Tarraga A.-M."/>
            <person name="Temple L."/>
            <person name="James K.D."/>
            <person name="Harris B."/>
            <person name="Quail M.A."/>
            <person name="Achtman M."/>
            <person name="Atkin R."/>
            <person name="Baker S."/>
            <person name="Basham D."/>
            <person name="Bason N."/>
            <person name="Cherevach I."/>
            <person name="Chillingworth T."/>
            <person name="Collins M."/>
            <person name="Cronin A."/>
            <person name="Davis P."/>
            <person name="Doggett J."/>
            <person name="Feltwell T."/>
            <person name="Goble A."/>
            <person name="Hamlin N."/>
            <person name="Hauser H."/>
            <person name="Holroyd S."/>
            <person name="Jagels K."/>
            <person name="Leather S."/>
            <person name="Moule S."/>
            <person name="Norberczak H."/>
            <person name="O'Neil S."/>
            <person name="Ormond D."/>
            <person name="Price C."/>
            <person name="Rabbinowitsch E."/>
            <person name="Rutter S."/>
            <person name="Sanders M."/>
            <person name="Saunders D."/>
            <person name="Seeger K."/>
            <person name="Sharp S."/>
            <person name="Simmonds M."/>
            <person name="Skelton J."/>
            <person name="Squares R."/>
            <person name="Squares S."/>
            <person name="Stevens K."/>
            <person name="Unwin L."/>
            <person name="Whitehead S."/>
            <person name="Barrell B.G."/>
            <person name="Maskell D.J."/>
        </authorList>
    </citation>
    <scope>NUCLEOTIDE SEQUENCE [LARGE SCALE GENOMIC DNA]</scope>
    <source>
        <strain>ATCC BAA-588 / NCTC 13252 / RB50</strain>
    </source>
</reference>
<accession>Q7WEY7</accession>
<keyword id="KW-0963">Cytoplasm</keyword>
<keyword id="KW-0328">Glycosyltransferase</keyword>
<keyword id="KW-0660">Purine salvage</keyword>
<keyword id="KW-0808">Transferase</keyword>
<gene>
    <name evidence="1" type="primary">apt</name>
    <name type="ordered locus">BB4493</name>
</gene>
<name>APT_BORBR</name>
<proteinExistence type="inferred from homology"/>
<protein>
    <recommendedName>
        <fullName evidence="1">Adenine phosphoribosyltransferase</fullName>
        <shortName evidence="1">APRT</shortName>
        <ecNumber evidence="1">2.4.2.7</ecNumber>
    </recommendedName>
</protein>